<dbReference type="EC" id="2.8.1.12" evidence="2"/>
<dbReference type="EMBL" id="CH479182">
    <property type="protein sequence ID" value="EDW33855.1"/>
    <property type="molecule type" value="Genomic_DNA"/>
</dbReference>
<dbReference type="SMR" id="B4GE20"/>
<dbReference type="STRING" id="7234.B4GE20"/>
<dbReference type="EnsemblMetazoa" id="FBtr0187553">
    <property type="protein sequence ID" value="FBpp0186045"/>
    <property type="gene ID" value="FBgn0159531"/>
</dbReference>
<dbReference type="EnsemblMetazoa" id="XM_002016719.2">
    <property type="protein sequence ID" value="XP_002016755.1"/>
    <property type="gene ID" value="LOC6591577"/>
</dbReference>
<dbReference type="GeneID" id="6591577"/>
<dbReference type="KEGG" id="dpe:6591577"/>
<dbReference type="CTD" id="43017"/>
<dbReference type="eggNOG" id="KOG3307">
    <property type="taxonomic scope" value="Eukaryota"/>
</dbReference>
<dbReference type="HOGENOM" id="CLU_045449_0_0_1"/>
<dbReference type="OMA" id="KIRSQWN"/>
<dbReference type="OrthoDB" id="5531344at2759"/>
<dbReference type="PhylomeDB" id="B4GE20"/>
<dbReference type="UniPathway" id="UPA00344"/>
<dbReference type="Proteomes" id="UP000008744">
    <property type="component" value="Unassembled WGS sequence"/>
</dbReference>
<dbReference type="GO" id="GO:0140672">
    <property type="term" value="C:ATAC complex"/>
    <property type="evidence" value="ECO:0007669"/>
    <property type="project" value="EnsemblMetazoa"/>
</dbReference>
<dbReference type="GO" id="GO:0005829">
    <property type="term" value="C:cytosol"/>
    <property type="evidence" value="ECO:0000250"/>
    <property type="project" value="UniProtKB"/>
</dbReference>
<dbReference type="GO" id="GO:1990140">
    <property type="term" value="C:molybdopterin synthase complex"/>
    <property type="evidence" value="ECO:0000250"/>
    <property type="project" value="UniProtKB"/>
</dbReference>
<dbReference type="GO" id="GO:0005700">
    <property type="term" value="C:polytene chromosome"/>
    <property type="evidence" value="ECO:0007669"/>
    <property type="project" value="EnsemblMetazoa"/>
</dbReference>
<dbReference type="GO" id="GO:0030366">
    <property type="term" value="F:molybdopterin synthase activity"/>
    <property type="evidence" value="ECO:0007669"/>
    <property type="project" value="UniProtKB-UniRule"/>
</dbReference>
<dbReference type="GO" id="GO:0006338">
    <property type="term" value="P:chromatin remodeling"/>
    <property type="evidence" value="ECO:0007669"/>
    <property type="project" value="EnsemblMetazoa"/>
</dbReference>
<dbReference type="GO" id="GO:0006777">
    <property type="term" value="P:Mo-molybdopterin cofactor biosynthetic process"/>
    <property type="evidence" value="ECO:0000250"/>
    <property type="project" value="UniProtKB"/>
</dbReference>
<dbReference type="CDD" id="cd00756">
    <property type="entry name" value="MoaE"/>
    <property type="match status" value="1"/>
</dbReference>
<dbReference type="FunFam" id="3.90.1170.40:FF:000002">
    <property type="entry name" value="Molybdopterin synthase catalytic subunit"/>
    <property type="match status" value="1"/>
</dbReference>
<dbReference type="Gene3D" id="3.90.1170.40">
    <property type="entry name" value="Molybdopterin biosynthesis MoaE subunit"/>
    <property type="match status" value="1"/>
</dbReference>
<dbReference type="HAMAP" id="MF_03052">
    <property type="entry name" value="MOC2B"/>
    <property type="match status" value="1"/>
</dbReference>
<dbReference type="InterPro" id="IPR036563">
    <property type="entry name" value="MoaE_sf"/>
</dbReference>
<dbReference type="InterPro" id="IPR028888">
    <property type="entry name" value="MOCS2B_euk"/>
</dbReference>
<dbReference type="InterPro" id="IPR003448">
    <property type="entry name" value="Mopterin_biosynth_MoaE"/>
</dbReference>
<dbReference type="PANTHER" id="PTHR23404">
    <property type="entry name" value="MOLYBDOPTERIN SYNTHASE RELATED"/>
    <property type="match status" value="1"/>
</dbReference>
<dbReference type="Pfam" id="PF02391">
    <property type="entry name" value="MoaE"/>
    <property type="match status" value="1"/>
</dbReference>
<dbReference type="SUPFAM" id="SSF54690">
    <property type="entry name" value="Molybdopterin synthase subunit MoaE"/>
    <property type="match status" value="1"/>
</dbReference>
<name>MOC2B_DROPE</name>
<reference key="1">
    <citation type="journal article" date="2007" name="Nature">
        <title>Evolution of genes and genomes on the Drosophila phylogeny.</title>
        <authorList>
            <consortium name="Drosophila 12 genomes consortium"/>
        </authorList>
    </citation>
    <scope>NUCLEOTIDE SEQUENCE [LARGE SCALE GENOMIC DNA]</scope>
    <source>
        <strain>MSH-3 / Tucson 14011-0111.49</strain>
    </source>
</reference>
<evidence type="ECO:0000250" key="1">
    <source>
        <dbReference type="UniProtKB" id="Q9VBX2"/>
    </source>
</evidence>
<evidence type="ECO:0000255" key="2">
    <source>
        <dbReference type="HAMAP-Rule" id="MF_03052"/>
    </source>
</evidence>
<feature type="chain" id="PRO_0000369338" description="Molybdopterin synthase catalytic subunit">
    <location>
        <begin position="1"/>
        <end position="361"/>
    </location>
</feature>
<feature type="binding site" evidence="2">
    <location>
        <begin position="101"/>
        <end position="102"/>
    </location>
    <ligand>
        <name>substrate</name>
    </ligand>
</feature>
<feature type="binding site" evidence="2">
    <location>
        <position position="117"/>
    </location>
    <ligand>
        <name>substrate</name>
    </ligand>
</feature>
<feature type="binding site" evidence="2">
    <location>
        <begin position="124"/>
        <end position="126"/>
    </location>
    <ligand>
        <name>substrate</name>
    </ligand>
</feature>
<protein>
    <recommendedName>
        <fullName evidence="2">Molybdopterin synthase catalytic subunit</fullName>
        <ecNumber evidence="2">2.8.1.12</ecNumber>
    </recommendedName>
    <alternativeName>
        <fullName evidence="2">Molybdenum cofactor synthesis protein 2 large subunit</fullName>
    </alternativeName>
    <alternativeName>
        <fullName evidence="2">Molybdenum cofactor synthesis protein 2B</fullName>
        <shortName evidence="2">MOCS2B</shortName>
    </alternativeName>
</protein>
<proteinExistence type="inferred from homology"/>
<organism>
    <name type="scientific">Drosophila persimilis</name>
    <name type="common">Fruit fly</name>
    <dbReference type="NCBI Taxonomy" id="7234"/>
    <lineage>
        <taxon>Eukaryota</taxon>
        <taxon>Metazoa</taxon>
        <taxon>Ecdysozoa</taxon>
        <taxon>Arthropoda</taxon>
        <taxon>Hexapoda</taxon>
        <taxon>Insecta</taxon>
        <taxon>Pterygota</taxon>
        <taxon>Neoptera</taxon>
        <taxon>Endopterygota</taxon>
        <taxon>Diptera</taxon>
        <taxon>Brachycera</taxon>
        <taxon>Muscomorpha</taxon>
        <taxon>Ephydroidea</taxon>
        <taxon>Drosophilidae</taxon>
        <taxon>Drosophila</taxon>
        <taxon>Sophophora</taxon>
    </lineage>
</organism>
<gene>
    <name evidence="1" type="primary">Mocs2B</name>
    <name evidence="2" type="synonym">Mocs2</name>
    <name type="ORF">GL21938</name>
</gene>
<accession>B4GE20</accession>
<keyword id="KW-0963">Cytoplasm</keyword>
<keyword id="KW-0501">Molybdenum cofactor biosynthesis</keyword>
<keyword id="KW-1185">Reference proteome</keyword>
<keyword id="KW-0808">Transferase</keyword>
<sequence>MNHIKLIDCPIDVTYAINLISDPSCGASSIFIGTTRDSFQGKKVVSLAYEAYENMALKEMDKICSDLRATWPDLKHILIYHRLGTVPENEASVVIAASAPHRSAALKAVTFAIDQLKSRVPIWKKELYEGNHDAEWKENSESIRPKKSLSSFNYSVCKVDESRVVSRNLVQIRANDCELKNRVECFFKRKRAEINSCNVIDFKQSNLSSNINSDTEVDVSCARTQSTISKQEQSNCHLKVRRATNRCGPQQMQFRPKYKHELSRLTTSRVSTNEVGESLQNSRLHSIETYMGLTSKNNENIINRIKNVENRILLLESTSPEYQHFFEQSCMDQPEKKIKTNKTYSAHELRVYIHRKNKECP</sequence>
<comment type="function">
    <text evidence="2">Catalytic subunit of the molybdopterin synthase complex, a complex that catalyzes the conversion of precursor Z into molybdopterin. Acts by mediating the incorporation of 2 sulfur atoms from thiocarboxylated Mocs2A into precursor Z to generate a dithiolene group.</text>
</comment>
<comment type="catalytic activity">
    <reaction evidence="2">
        <text>2 [molybdopterin-synthase sulfur-carrier protein]-C-terminal-Gly-aminoethanethioate + cyclic pyranopterin phosphate + H2O = molybdopterin + 2 [molybdopterin-synthase sulfur-carrier protein]-C-terminal Gly-Gly + 2 H(+)</text>
        <dbReference type="Rhea" id="RHEA:26333"/>
        <dbReference type="Rhea" id="RHEA-COMP:12202"/>
        <dbReference type="Rhea" id="RHEA-COMP:19907"/>
        <dbReference type="ChEBI" id="CHEBI:15377"/>
        <dbReference type="ChEBI" id="CHEBI:15378"/>
        <dbReference type="ChEBI" id="CHEBI:58698"/>
        <dbReference type="ChEBI" id="CHEBI:59648"/>
        <dbReference type="ChEBI" id="CHEBI:90778"/>
        <dbReference type="ChEBI" id="CHEBI:232372"/>
        <dbReference type="EC" id="2.8.1.12"/>
    </reaction>
</comment>
<comment type="pathway">
    <text evidence="2">Cofactor biosynthesis; molybdopterin biosynthesis.</text>
</comment>
<comment type="subunit">
    <text evidence="2">Heterotetramer; composed of 2 small (Mocs2A) and 2 large (Mocs2B) subunits.</text>
</comment>
<comment type="subcellular location">
    <subcellularLocation>
        <location evidence="2">Cytoplasm</location>
    </subcellularLocation>
</comment>
<comment type="miscellaneous">
    <text>This protein is produced by a bicistronic gene which also produces the small subunit (Mocs2A).</text>
</comment>
<comment type="similarity">
    <text evidence="2">Belongs to the MoaE family. MOCS2B subfamily.</text>
</comment>